<proteinExistence type="inferred from homology"/>
<gene>
    <name evidence="1" type="primary">atpH</name>
    <name type="ordered locus">PA14_73280</name>
</gene>
<comment type="function">
    <text evidence="1">F(1)F(0) ATP synthase produces ATP from ADP in the presence of a proton or sodium gradient. F-type ATPases consist of two structural domains, F(1) containing the extramembraneous catalytic core and F(0) containing the membrane proton channel, linked together by a central stalk and a peripheral stalk. During catalysis, ATP synthesis in the catalytic domain of F(1) is coupled via a rotary mechanism of the central stalk subunits to proton translocation.</text>
</comment>
<comment type="function">
    <text evidence="1">This protein is part of the stalk that links CF(0) to CF(1). It either transmits conformational changes from CF(0) to CF(1) or is implicated in proton conduction.</text>
</comment>
<comment type="subunit">
    <text evidence="1">F-type ATPases have 2 components, F(1) - the catalytic core - and F(0) - the membrane proton channel. F(1) has five subunits: alpha(3), beta(3), gamma(1), delta(1), epsilon(1). F(0) has three main subunits: a(1), b(2) and c(10-14). The alpha and beta chains form an alternating ring which encloses part of the gamma chain. F(1) is attached to F(0) by a central stalk formed by the gamma and epsilon chains, while a peripheral stalk is formed by the delta and b chains.</text>
</comment>
<comment type="subcellular location">
    <subcellularLocation>
        <location evidence="1">Cell inner membrane</location>
        <topology evidence="1">Peripheral membrane protein</topology>
    </subcellularLocation>
</comment>
<comment type="similarity">
    <text evidence="1">Belongs to the ATPase delta chain family.</text>
</comment>
<protein>
    <recommendedName>
        <fullName evidence="1">ATP synthase subunit delta</fullName>
    </recommendedName>
    <alternativeName>
        <fullName evidence="1">ATP synthase F(1) sector subunit delta</fullName>
    </alternativeName>
    <alternativeName>
        <fullName evidence="1">F-type ATPase subunit delta</fullName>
        <shortName evidence="1">F-ATPase subunit delta</shortName>
    </alternativeName>
</protein>
<organism>
    <name type="scientific">Pseudomonas aeruginosa (strain UCBPP-PA14)</name>
    <dbReference type="NCBI Taxonomy" id="208963"/>
    <lineage>
        <taxon>Bacteria</taxon>
        <taxon>Pseudomonadati</taxon>
        <taxon>Pseudomonadota</taxon>
        <taxon>Gammaproteobacteria</taxon>
        <taxon>Pseudomonadales</taxon>
        <taxon>Pseudomonadaceae</taxon>
        <taxon>Pseudomonas</taxon>
    </lineage>
</organism>
<keyword id="KW-0066">ATP synthesis</keyword>
<keyword id="KW-0997">Cell inner membrane</keyword>
<keyword id="KW-1003">Cell membrane</keyword>
<keyword id="KW-0139">CF(1)</keyword>
<keyword id="KW-0375">Hydrogen ion transport</keyword>
<keyword id="KW-0406">Ion transport</keyword>
<keyword id="KW-0472">Membrane</keyword>
<keyword id="KW-0813">Transport</keyword>
<evidence type="ECO:0000255" key="1">
    <source>
        <dbReference type="HAMAP-Rule" id="MF_01416"/>
    </source>
</evidence>
<reference key="1">
    <citation type="journal article" date="2006" name="Genome Biol.">
        <title>Genomic analysis reveals that Pseudomonas aeruginosa virulence is combinatorial.</title>
        <authorList>
            <person name="Lee D.G."/>
            <person name="Urbach J.M."/>
            <person name="Wu G."/>
            <person name="Liberati N.T."/>
            <person name="Feinbaum R.L."/>
            <person name="Miyata S."/>
            <person name="Diggins L.T."/>
            <person name="He J."/>
            <person name="Saucier M."/>
            <person name="Deziel E."/>
            <person name="Friedman L."/>
            <person name="Li L."/>
            <person name="Grills G."/>
            <person name="Montgomery K."/>
            <person name="Kucherlapati R."/>
            <person name="Rahme L.G."/>
            <person name="Ausubel F.M."/>
        </authorList>
    </citation>
    <scope>NUCLEOTIDE SEQUENCE [LARGE SCALE GENOMIC DNA]</scope>
    <source>
        <strain>UCBPP-PA14</strain>
    </source>
</reference>
<sequence>MAELTTLARPYAKAAFEYAQAHQQLADWSAALGVLAAVSQDDTVRQLLKEPQLTSSAKAQSLIDVCGDKLNAPAQNFVRTVAENKRLELLPTIAEMYEQLKAEQEKSVEVEVTSAFTLSKEQQDKLAKALSARLSREVRLHASEDASLIGGVIIRAGDLVIDGSVRGKLAKLAEALKS</sequence>
<accession>Q02DF1</accession>
<dbReference type="EMBL" id="CP000438">
    <property type="protein sequence ID" value="ABJ14944.1"/>
    <property type="molecule type" value="Genomic_DNA"/>
</dbReference>
<dbReference type="RefSeq" id="WP_003097135.1">
    <property type="nucleotide sequence ID" value="NZ_CP034244.1"/>
</dbReference>
<dbReference type="SMR" id="Q02DF1"/>
<dbReference type="KEGG" id="pau:PA14_73280"/>
<dbReference type="PseudoCAP" id="PA14_73280"/>
<dbReference type="HOGENOM" id="CLU_085114_3_0_6"/>
<dbReference type="BioCyc" id="PAER208963:G1G74-6164-MONOMER"/>
<dbReference type="Proteomes" id="UP000000653">
    <property type="component" value="Chromosome"/>
</dbReference>
<dbReference type="GO" id="GO:0005886">
    <property type="term" value="C:plasma membrane"/>
    <property type="evidence" value="ECO:0007669"/>
    <property type="project" value="UniProtKB-SubCell"/>
</dbReference>
<dbReference type="GO" id="GO:0045259">
    <property type="term" value="C:proton-transporting ATP synthase complex"/>
    <property type="evidence" value="ECO:0007669"/>
    <property type="project" value="UniProtKB-KW"/>
</dbReference>
<dbReference type="GO" id="GO:0046933">
    <property type="term" value="F:proton-transporting ATP synthase activity, rotational mechanism"/>
    <property type="evidence" value="ECO:0007669"/>
    <property type="project" value="UniProtKB-UniRule"/>
</dbReference>
<dbReference type="Gene3D" id="1.10.520.20">
    <property type="entry name" value="N-terminal domain of the delta subunit of the F1F0-ATP synthase"/>
    <property type="match status" value="1"/>
</dbReference>
<dbReference type="HAMAP" id="MF_01416">
    <property type="entry name" value="ATP_synth_delta_bact"/>
    <property type="match status" value="1"/>
</dbReference>
<dbReference type="InterPro" id="IPR026015">
    <property type="entry name" value="ATP_synth_OSCP/delta_N_sf"/>
</dbReference>
<dbReference type="InterPro" id="IPR000711">
    <property type="entry name" value="ATPase_OSCP/dsu"/>
</dbReference>
<dbReference type="NCBIfam" id="TIGR01145">
    <property type="entry name" value="ATP_synt_delta"/>
    <property type="match status" value="1"/>
</dbReference>
<dbReference type="NCBIfam" id="NF004402">
    <property type="entry name" value="PRK05758.2-2"/>
    <property type="match status" value="1"/>
</dbReference>
<dbReference type="PANTHER" id="PTHR11910">
    <property type="entry name" value="ATP SYNTHASE DELTA CHAIN"/>
    <property type="match status" value="1"/>
</dbReference>
<dbReference type="Pfam" id="PF00213">
    <property type="entry name" value="OSCP"/>
    <property type="match status" value="1"/>
</dbReference>
<dbReference type="PRINTS" id="PR00125">
    <property type="entry name" value="ATPASEDELTA"/>
</dbReference>
<dbReference type="SUPFAM" id="SSF47928">
    <property type="entry name" value="N-terminal domain of the delta subunit of the F1F0-ATP synthase"/>
    <property type="match status" value="1"/>
</dbReference>
<feature type="chain" id="PRO_1000184771" description="ATP synthase subunit delta">
    <location>
        <begin position="1"/>
        <end position="178"/>
    </location>
</feature>
<name>ATPD_PSEAB</name>